<name>CARAA_SPHSX</name>
<comment type="function">
    <text evidence="3">Part of the multicomponent carbazole 1,9a-dioxygenase (CARDO), that converts carbazole (CAR) into 2-aminobiphenyl-2,3-diol. Catalyzes the dioxygenation at the angular (C-9a) and adjacent (C-1) positions of carbazole to yield a highly unstable cis-hydrodiol intermediate which is spontaneously converted to 2-aminobiphenyl-2,3-diol.</text>
</comment>
<comment type="catalytic activity">
    <reaction>
        <text>9H-carbazole + NADH + O2 + H(+) = 2'-aminobiphenyl-2,3-diol + NAD(+)</text>
        <dbReference type="Rhea" id="RHEA:27838"/>
        <dbReference type="ChEBI" id="CHEBI:15378"/>
        <dbReference type="ChEBI" id="CHEBI:15379"/>
        <dbReference type="ChEBI" id="CHEBI:27543"/>
        <dbReference type="ChEBI" id="CHEBI:29010"/>
        <dbReference type="ChEBI" id="CHEBI:57540"/>
        <dbReference type="ChEBI" id="CHEBI:57945"/>
        <dbReference type="EC" id="1.14.12.22"/>
    </reaction>
</comment>
<comment type="catalytic activity">
    <reaction>
        <text>9H-carbazole + NADPH + O2 + H(+) = 2'-aminobiphenyl-2,3-diol + NADP(+)</text>
        <dbReference type="Rhea" id="RHEA:27842"/>
        <dbReference type="ChEBI" id="CHEBI:15378"/>
        <dbReference type="ChEBI" id="CHEBI:15379"/>
        <dbReference type="ChEBI" id="CHEBI:27543"/>
        <dbReference type="ChEBI" id="CHEBI:29010"/>
        <dbReference type="ChEBI" id="CHEBI:57783"/>
        <dbReference type="ChEBI" id="CHEBI:58349"/>
        <dbReference type="EC" id="1.14.12.22"/>
    </reaction>
</comment>
<comment type="cofactor">
    <cofactor evidence="2">
        <name>[2Fe-2S] cluster</name>
        <dbReference type="ChEBI" id="CHEBI:190135"/>
    </cofactor>
    <text evidence="2">Binds 1 [2Fe-2S] cluster per subunit.</text>
</comment>
<comment type="subunit">
    <text evidence="4">Homotrimer. Carbazole 1,9a-dioxygenase complex consists of a terminal oxygenase component CarAa, a ferredoxin reductase component fdr and a ferredoxin component CarAc (Probable).</text>
</comment>
<sequence>MANQPSIAERRTKVWEPYIRAKLGFRNHWYPVRLASEIAEGTPVPVKLLGEKILLNRVGGKVYAIQDRCLHRGVTLSDRVECYSKNTISCWYHGWTYRWDDGRLVDILTNPGSVQIGRRALKTFPVEEAKGLIFVYVGDGEPTPLIEDVPPGFLDENRAIHGQHRLVASNWRLGAENGFDAGHVLIHKNSILVKGNDIILPLGFAPGDPDQLTRSEVAAGKPKGVYDLLGEHSVPVFEGMIEGKPAIHGNIGSKRVAISISIWLPGVLKVEPWPDPELTQFEWYVPVDETSHLYFQTLGKVVTSKEAADSFEREFHEKWVGLALNGFNDDDIMARESMEPFYTDDRGWSEEILFEPDRAIIEWRGLASQHNRGIQEAR</sequence>
<proteinExistence type="evidence at protein level"/>
<dbReference type="EC" id="1.14.12.22"/>
<dbReference type="EMBL" id="GU123624">
    <property type="protein sequence ID" value="ADC31794.1"/>
    <property type="molecule type" value="Genomic_DNA"/>
</dbReference>
<dbReference type="SMR" id="D5IGG0"/>
<dbReference type="KEGG" id="ag:ADC31794"/>
<dbReference type="BioCyc" id="MetaCyc:MONOMER-15737"/>
<dbReference type="BRENDA" id="1.14.12.22">
    <property type="organism ID" value="5801"/>
</dbReference>
<dbReference type="GO" id="GO:0051537">
    <property type="term" value="F:2 iron, 2 sulfur cluster binding"/>
    <property type="evidence" value="ECO:0000250"/>
    <property type="project" value="UniProtKB"/>
</dbReference>
<dbReference type="GO" id="GO:0018564">
    <property type="term" value="F:carbazole 1,9a-dioxygenase [NAD(P)H] activity"/>
    <property type="evidence" value="ECO:0000250"/>
    <property type="project" value="UniProtKB"/>
</dbReference>
<dbReference type="GO" id="GO:0046872">
    <property type="term" value="F:metal ion binding"/>
    <property type="evidence" value="ECO:0007669"/>
    <property type="project" value="UniProtKB-KW"/>
</dbReference>
<dbReference type="GO" id="GO:0046232">
    <property type="term" value="P:carbazole catabolic process"/>
    <property type="evidence" value="ECO:0000314"/>
    <property type="project" value="UniProtKB"/>
</dbReference>
<dbReference type="CDD" id="cd08878">
    <property type="entry name" value="RHO_alpha_C_DMO-like"/>
    <property type="match status" value="1"/>
</dbReference>
<dbReference type="CDD" id="cd03548">
    <property type="entry name" value="Rieske_RO_Alpha_OMO_CARDO"/>
    <property type="match status" value="1"/>
</dbReference>
<dbReference type="Gene3D" id="2.20.25.10">
    <property type="match status" value="1"/>
</dbReference>
<dbReference type="Gene3D" id="2.20.25.680">
    <property type="match status" value="1"/>
</dbReference>
<dbReference type="Gene3D" id="3.90.380.10">
    <property type="entry name" value="Naphthalene 1,2-dioxygenase Alpha Subunit, Chain A, domain 1"/>
    <property type="match status" value="1"/>
</dbReference>
<dbReference type="InterPro" id="IPR050584">
    <property type="entry name" value="Cholesterol_7-desaturase"/>
</dbReference>
<dbReference type="InterPro" id="IPR021028">
    <property type="entry name" value="Homotrim_ring_OHase_catalytic"/>
</dbReference>
<dbReference type="InterPro" id="IPR017941">
    <property type="entry name" value="Rieske_2Fe-2S"/>
</dbReference>
<dbReference type="InterPro" id="IPR036922">
    <property type="entry name" value="Rieske_2Fe-2S_sf"/>
</dbReference>
<dbReference type="PANTHER" id="PTHR21266:SF59">
    <property type="entry name" value="BLR4922 PROTEIN"/>
    <property type="match status" value="1"/>
</dbReference>
<dbReference type="PANTHER" id="PTHR21266">
    <property type="entry name" value="IRON-SULFUR DOMAIN CONTAINING PROTEIN"/>
    <property type="match status" value="1"/>
</dbReference>
<dbReference type="Pfam" id="PF11723">
    <property type="entry name" value="Aromatic_hydrox"/>
    <property type="match status" value="1"/>
</dbReference>
<dbReference type="Pfam" id="PF00355">
    <property type="entry name" value="Rieske"/>
    <property type="match status" value="1"/>
</dbReference>
<dbReference type="SUPFAM" id="SSF55961">
    <property type="entry name" value="Bet v1-like"/>
    <property type="match status" value="1"/>
</dbReference>
<dbReference type="SUPFAM" id="SSF50022">
    <property type="entry name" value="ISP domain"/>
    <property type="match status" value="1"/>
</dbReference>
<dbReference type="PROSITE" id="PS51296">
    <property type="entry name" value="RIESKE"/>
    <property type="match status" value="1"/>
</dbReference>
<reference key="1">
    <citation type="journal article" date="2010" name="PLoS ONE">
        <title>The genes coding for the conversion of carbazole to catechol are flanked by IS6100 elements in Sphingomonas sp. strain XLDN2-5.</title>
        <authorList>
            <person name="Gai Z."/>
            <person name="Wang X."/>
            <person name="Liu X."/>
            <person name="Tai C."/>
            <person name="Tang H."/>
            <person name="He X."/>
            <person name="Wu G."/>
            <person name="Deng Z."/>
            <person name="Xu P."/>
        </authorList>
    </citation>
    <scope>NUCLEOTIDE SEQUENCE [GENOMIC DNA]</scope>
    <scope>FUNCTION IN THE CARBAZOLE DEGRADATION</scope>
    <scope>NOMENCLATURE</scope>
    <source>
        <strain>XLDN2-5</strain>
    </source>
</reference>
<protein>
    <recommendedName>
        <fullName>Carbazole 1,9a-dioxygenase, terminal oxygenase component CarAa</fullName>
        <shortName>CARDO</shortName>
        <ecNumber>1.14.12.22</ecNumber>
    </recommendedName>
</protein>
<organism>
    <name type="scientific">Sphingomonas sp</name>
    <dbReference type="NCBI Taxonomy" id="28214"/>
    <lineage>
        <taxon>Bacteria</taxon>
        <taxon>Pseudomonadati</taxon>
        <taxon>Pseudomonadota</taxon>
        <taxon>Alphaproteobacteria</taxon>
        <taxon>Sphingomonadales</taxon>
        <taxon>Sphingomonadaceae</taxon>
        <taxon>Sphingomonas</taxon>
    </lineage>
</organism>
<feature type="initiator methionine" description="Removed" evidence="1">
    <location>
        <position position="1"/>
    </location>
</feature>
<feature type="chain" id="PRO_0000419025" description="Carbazole 1,9a-dioxygenase, terminal oxygenase component CarAa">
    <location>
        <begin position="2"/>
        <end position="378"/>
    </location>
</feature>
<feature type="domain" description="Rieske" evidence="2">
    <location>
        <begin position="29"/>
        <end position="135"/>
    </location>
</feature>
<feature type="binding site" evidence="2">
    <location>
        <position position="69"/>
    </location>
    <ligand>
        <name>[2Fe-2S] cluster</name>
        <dbReference type="ChEBI" id="CHEBI:190135"/>
    </ligand>
</feature>
<feature type="binding site" evidence="2">
    <location>
        <position position="71"/>
    </location>
    <ligand>
        <name>[2Fe-2S] cluster</name>
        <dbReference type="ChEBI" id="CHEBI:190135"/>
    </ligand>
</feature>
<feature type="binding site" evidence="2">
    <location>
        <position position="90"/>
    </location>
    <ligand>
        <name>[2Fe-2S] cluster</name>
        <dbReference type="ChEBI" id="CHEBI:190135"/>
    </ligand>
</feature>
<feature type="binding site" evidence="2">
    <location>
        <position position="93"/>
    </location>
    <ligand>
        <name>[2Fe-2S] cluster</name>
        <dbReference type="ChEBI" id="CHEBI:190135"/>
    </ligand>
</feature>
<accession>D5IGG0</accession>
<evidence type="ECO:0000250" key="1"/>
<evidence type="ECO:0000255" key="2">
    <source>
        <dbReference type="PROSITE-ProRule" id="PRU00628"/>
    </source>
</evidence>
<evidence type="ECO:0000269" key="3">
    <source>
    </source>
</evidence>
<evidence type="ECO:0000305" key="4"/>
<gene>
    <name type="primary">carAa</name>
</gene>
<keyword id="KW-0001">2Fe-2S</keyword>
<keyword id="KW-0223">Dioxygenase</keyword>
<keyword id="KW-0408">Iron</keyword>
<keyword id="KW-0411">Iron-sulfur</keyword>
<keyword id="KW-0479">Metal-binding</keyword>
<keyword id="KW-0520">NAD</keyword>
<keyword id="KW-0521">NADP</keyword>
<keyword id="KW-0560">Oxidoreductase</keyword>